<keyword id="KW-0067">ATP-binding</keyword>
<keyword id="KW-0131">Cell cycle</keyword>
<keyword id="KW-0132">Cell division</keyword>
<keyword id="KW-0133">Cell shape</keyword>
<keyword id="KW-0961">Cell wall biogenesis/degradation</keyword>
<keyword id="KW-0963">Cytoplasm</keyword>
<keyword id="KW-0436">Ligase</keyword>
<keyword id="KW-0547">Nucleotide-binding</keyword>
<keyword id="KW-0573">Peptidoglycan synthesis</keyword>
<organism>
    <name type="scientific">Vibrio campbellii (strain ATCC BAA-1116)</name>
    <dbReference type="NCBI Taxonomy" id="2902295"/>
    <lineage>
        <taxon>Bacteria</taxon>
        <taxon>Pseudomonadati</taxon>
        <taxon>Pseudomonadota</taxon>
        <taxon>Gammaproteobacteria</taxon>
        <taxon>Vibrionales</taxon>
        <taxon>Vibrionaceae</taxon>
        <taxon>Vibrio</taxon>
    </lineage>
</organism>
<sequence length="485" mass="52844">MTIQHTQDLAQIRAMVPEMRRVKSIHFIGIGGAGMSGIAEVLLNEGYQITGSDLSENPVTERLVSKGATVFIGHQASNVEKASVVVVSTAINEENPEVMAARELRIPIVRRAEMLAELMRFRHGIAVAGTHGKTTTTALVTQIYSEAGLDPTFVNGGLVKSAGTNARLGSSRILIAEADESDASFLHLQPMVSIVTNIEADHMDTYGGDFETLKQTFIDFLHNLPFYGQAIVCIDDPVIRELIPRISRQVITYGFSEDADVRIEDYHQEGQQGKFTVVREGRANLDITLNIPGRHNALNASAAIAVATEDDISDEAILKAMAGTQGTGRRFDHLGEFDTGNGHAMLVDDYGHHPTEVDVTIHAARSGWQDKRLVMIFQPHRYSRTRDLYDDFANVLEQVDVLIMLDVYAAGEKPIAGADGRALCRTIRSRGKVDPIFVPEIEQLPSVLANVIQDGDLILTQGAGDVGKVAKQLAALELNISKMLG</sequence>
<accession>A7MXR2</accession>
<dbReference type="EC" id="6.3.2.8" evidence="1"/>
<dbReference type="EMBL" id="CP000789">
    <property type="protein sequence ID" value="ABU69902.1"/>
    <property type="molecule type" value="Genomic_DNA"/>
</dbReference>
<dbReference type="RefSeq" id="WP_012126988.1">
    <property type="nucleotide sequence ID" value="NC_022269.1"/>
</dbReference>
<dbReference type="SMR" id="A7MXR2"/>
<dbReference type="GeneID" id="67378459"/>
<dbReference type="KEGG" id="vha:VIBHAR_00903"/>
<dbReference type="PATRIC" id="fig|338187.25.peg.1715"/>
<dbReference type="UniPathway" id="UPA00219"/>
<dbReference type="Proteomes" id="UP000008152">
    <property type="component" value="Chromosome I"/>
</dbReference>
<dbReference type="GO" id="GO:0005737">
    <property type="term" value="C:cytoplasm"/>
    <property type="evidence" value="ECO:0007669"/>
    <property type="project" value="UniProtKB-SubCell"/>
</dbReference>
<dbReference type="GO" id="GO:0005524">
    <property type="term" value="F:ATP binding"/>
    <property type="evidence" value="ECO:0007669"/>
    <property type="project" value="UniProtKB-UniRule"/>
</dbReference>
<dbReference type="GO" id="GO:0008763">
    <property type="term" value="F:UDP-N-acetylmuramate-L-alanine ligase activity"/>
    <property type="evidence" value="ECO:0007669"/>
    <property type="project" value="UniProtKB-UniRule"/>
</dbReference>
<dbReference type="GO" id="GO:0051301">
    <property type="term" value="P:cell division"/>
    <property type="evidence" value="ECO:0007669"/>
    <property type="project" value="UniProtKB-KW"/>
</dbReference>
<dbReference type="GO" id="GO:0071555">
    <property type="term" value="P:cell wall organization"/>
    <property type="evidence" value="ECO:0007669"/>
    <property type="project" value="UniProtKB-KW"/>
</dbReference>
<dbReference type="GO" id="GO:0009252">
    <property type="term" value="P:peptidoglycan biosynthetic process"/>
    <property type="evidence" value="ECO:0007669"/>
    <property type="project" value="UniProtKB-UniRule"/>
</dbReference>
<dbReference type="GO" id="GO:0008360">
    <property type="term" value="P:regulation of cell shape"/>
    <property type="evidence" value="ECO:0007669"/>
    <property type="project" value="UniProtKB-KW"/>
</dbReference>
<dbReference type="FunFam" id="3.40.1190.10:FF:000001">
    <property type="entry name" value="UDP-N-acetylmuramate--L-alanine ligase"/>
    <property type="match status" value="1"/>
</dbReference>
<dbReference type="FunFam" id="3.40.50.720:FF:000046">
    <property type="entry name" value="UDP-N-acetylmuramate--L-alanine ligase"/>
    <property type="match status" value="1"/>
</dbReference>
<dbReference type="Gene3D" id="3.90.190.20">
    <property type="entry name" value="Mur ligase, C-terminal domain"/>
    <property type="match status" value="1"/>
</dbReference>
<dbReference type="Gene3D" id="3.40.1190.10">
    <property type="entry name" value="Mur-like, catalytic domain"/>
    <property type="match status" value="1"/>
</dbReference>
<dbReference type="Gene3D" id="3.40.50.720">
    <property type="entry name" value="NAD(P)-binding Rossmann-like Domain"/>
    <property type="match status" value="1"/>
</dbReference>
<dbReference type="HAMAP" id="MF_00046">
    <property type="entry name" value="MurC"/>
    <property type="match status" value="1"/>
</dbReference>
<dbReference type="InterPro" id="IPR036565">
    <property type="entry name" value="Mur-like_cat_sf"/>
</dbReference>
<dbReference type="InterPro" id="IPR004101">
    <property type="entry name" value="Mur_ligase_C"/>
</dbReference>
<dbReference type="InterPro" id="IPR036615">
    <property type="entry name" value="Mur_ligase_C_dom_sf"/>
</dbReference>
<dbReference type="InterPro" id="IPR013221">
    <property type="entry name" value="Mur_ligase_cen"/>
</dbReference>
<dbReference type="InterPro" id="IPR000713">
    <property type="entry name" value="Mur_ligase_N"/>
</dbReference>
<dbReference type="InterPro" id="IPR050061">
    <property type="entry name" value="MurCDEF_pg_biosynth"/>
</dbReference>
<dbReference type="InterPro" id="IPR005758">
    <property type="entry name" value="UDP-N-AcMur_Ala_ligase_MurC"/>
</dbReference>
<dbReference type="NCBIfam" id="TIGR01082">
    <property type="entry name" value="murC"/>
    <property type="match status" value="1"/>
</dbReference>
<dbReference type="PANTHER" id="PTHR43445:SF3">
    <property type="entry name" value="UDP-N-ACETYLMURAMATE--L-ALANINE LIGASE"/>
    <property type="match status" value="1"/>
</dbReference>
<dbReference type="PANTHER" id="PTHR43445">
    <property type="entry name" value="UDP-N-ACETYLMURAMATE--L-ALANINE LIGASE-RELATED"/>
    <property type="match status" value="1"/>
</dbReference>
<dbReference type="Pfam" id="PF01225">
    <property type="entry name" value="Mur_ligase"/>
    <property type="match status" value="1"/>
</dbReference>
<dbReference type="Pfam" id="PF02875">
    <property type="entry name" value="Mur_ligase_C"/>
    <property type="match status" value="1"/>
</dbReference>
<dbReference type="Pfam" id="PF08245">
    <property type="entry name" value="Mur_ligase_M"/>
    <property type="match status" value="1"/>
</dbReference>
<dbReference type="SUPFAM" id="SSF51984">
    <property type="entry name" value="MurCD N-terminal domain"/>
    <property type="match status" value="1"/>
</dbReference>
<dbReference type="SUPFAM" id="SSF53623">
    <property type="entry name" value="MurD-like peptide ligases, catalytic domain"/>
    <property type="match status" value="1"/>
</dbReference>
<dbReference type="SUPFAM" id="SSF53244">
    <property type="entry name" value="MurD-like peptide ligases, peptide-binding domain"/>
    <property type="match status" value="1"/>
</dbReference>
<reference key="1">
    <citation type="submission" date="2007-08" db="EMBL/GenBank/DDBJ databases">
        <authorList>
            <consortium name="The Vibrio harveyi Genome Sequencing Project"/>
            <person name="Bassler B."/>
            <person name="Clifton S.W."/>
            <person name="Fulton L."/>
            <person name="Delehaunty K."/>
            <person name="Fronick C."/>
            <person name="Harrison M."/>
            <person name="Markivic C."/>
            <person name="Fulton R."/>
            <person name="Tin-Wollam A.-M."/>
            <person name="Shah N."/>
            <person name="Pepin K."/>
            <person name="Nash W."/>
            <person name="Thiruvilangam P."/>
            <person name="Bhonagiri V."/>
            <person name="Waters C."/>
            <person name="Tu K.C."/>
            <person name="Irgon J."/>
            <person name="Wilson R.K."/>
        </authorList>
    </citation>
    <scope>NUCLEOTIDE SEQUENCE [LARGE SCALE GENOMIC DNA]</scope>
    <source>
        <strain>ATCC BAA-1116 / BB120</strain>
    </source>
</reference>
<evidence type="ECO:0000255" key="1">
    <source>
        <dbReference type="HAMAP-Rule" id="MF_00046"/>
    </source>
</evidence>
<protein>
    <recommendedName>
        <fullName evidence="1">UDP-N-acetylmuramate--L-alanine ligase</fullName>
        <ecNumber evidence="1">6.3.2.8</ecNumber>
    </recommendedName>
    <alternativeName>
        <fullName evidence="1">UDP-N-acetylmuramoyl-L-alanine synthetase</fullName>
    </alternativeName>
</protein>
<gene>
    <name evidence="1" type="primary">murC</name>
    <name type="ordered locus">VIBHAR_00903</name>
</gene>
<comment type="function">
    <text evidence="1">Cell wall formation.</text>
</comment>
<comment type="catalytic activity">
    <reaction evidence="1">
        <text>UDP-N-acetyl-alpha-D-muramate + L-alanine + ATP = UDP-N-acetyl-alpha-D-muramoyl-L-alanine + ADP + phosphate + H(+)</text>
        <dbReference type="Rhea" id="RHEA:23372"/>
        <dbReference type="ChEBI" id="CHEBI:15378"/>
        <dbReference type="ChEBI" id="CHEBI:30616"/>
        <dbReference type="ChEBI" id="CHEBI:43474"/>
        <dbReference type="ChEBI" id="CHEBI:57972"/>
        <dbReference type="ChEBI" id="CHEBI:70757"/>
        <dbReference type="ChEBI" id="CHEBI:83898"/>
        <dbReference type="ChEBI" id="CHEBI:456216"/>
        <dbReference type="EC" id="6.3.2.8"/>
    </reaction>
</comment>
<comment type="pathway">
    <text evidence="1">Cell wall biogenesis; peptidoglycan biosynthesis.</text>
</comment>
<comment type="subcellular location">
    <subcellularLocation>
        <location evidence="1">Cytoplasm</location>
    </subcellularLocation>
</comment>
<comment type="similarity">
    <text evidence="1">Belongs to the MurCDEF family.</text>
</comment>
<feature type="chain" id="PRO_1000004435" description="UDP-N-acetylmuramate--L-alanine ligase">
    <location>
        <begin position="1"/>
        <end position="485"/>
    </location>
</feature>
<feature type="binding site" evidence="1">
    <location>
        <begin position="129"/>
        <end position="135"/>
    </location>
    <ligand>
        <name>ATP</name>
        <dbReference type="ChEBI" id="CHEBI:30616"/>
    </ligand>
</feature>
<proteinExistence type="inferred from homology"/>
<name>MURC_VIBC1</name>